<protein>
    <recommendedName>
        <fullName evidence="1">Adenine phosphoribosyltransferase</fullName>
        <shortName evidence="1">APRT</shortName>
        <ecNumber evidence="1">2.4.2.7</ecNumber>
    </recommendedName>
</protein>
<gene>
    <name evidence="1" type="primary">apt</name>
    <name type="ordered locus">NTHI1938</name>
</gene>
<reference key="1">
    <citation type="journal article" date="2005" name="J. Bacteriol.">
        <title>Genomic sequence of an otitis media isolate of nontypeable Haemophilus influenzae: comparative study with H. influenzae serotype d, strain KW20.</title>
        <authorList>
            <person name="Harrison A."/>
            <person name="Dyer D.W."/>
            <person name="Gillaspy A."/>
            <person name="Ray W.C."/>
            <person name="Mungur R."/>
            <person name="Carson M.B."/>
            <person name="Zhong H."/>
            <person name="Gipson J."/>
            <person name="Gipson M."/>
            <person name="Johnson L.S."/>
            <person name="Lewis L."/>
            <person name="Bakaletz L.O."/>
            <person name="Munson R.S. Jr."/>
        </authorList>
    </citation>
    <scope>NUCLEOTIDE SEQUENCE [LARGE SCALE GENOMIC DNA]</scope>
    <source>
        <strain>86-028NP</strain>
    </source>
</reference>
<keyword id="KW-0963">Cytoplasm</keyword>
<keyword id="KW-0328">Glycosyltransferase</keyword>
<keyword id="KW-0660">Purine salvage</keyword>
<keyword id="KW-0808">Transferase</keyword>
<dbReference type="EC" id="2.4.2.7" evidence="1"/>
<dbReference type="EMBL" id="CP000057">
    <property type="protein sequence ID" value="AAX88690.1"/>
    <property type="molecule type" value="Genomic_DNA"/>
</dbReference>
<dbReference type="RefSeq" id="WP_005650156.1">
    <property type="nucleotide sequence ID" value="NC_007146.2"/>
</dbReference>
<dbReference type="SMR" id="Q4QJV7"/>
<dbReference type="GeneID" id="93220636"/>
<dbReference type="KEGG" id="hit:NTHI1938"/>
<dbReference type="HOGENOM" id="CLU_063339_3_0_6"/>
<dbReference type="UniPathway" id="UPA00588">
    <property type="reaction ID" value="UER00646"/>
</dbReference>
<dbReference type="Proteomes" id="UP000002525">
    <property type="component" value="Chromosome"/>
</dbReference>
<dbReference type="GO" id="GO:0005829">
    <property type="term" value="C:cytosol"/>
    <property type="evidence" value="ECO:0007669"/>
    <property type="project" value="TreeGrafter"/>
</dbReference>
<dbReference type="GO" id="GO:0003999">
    <property type="term" value="F:adenine phosphoribosyltransferase activity"/>
    <property type="evidence" value="ECO:0007669"/>
    <property type="project" value="UniProtKB-UniRule"/>
</dbReference>
<dbReference type="GO" id="GO:0006168">
    <property type="term" value="P:adenine salvage"/>
    <property type="evidence" value="ECO:0007669"/>
    <property type="project" value="InterPro"/>
</dbReference>
<dbReference type="GO" id="GO:0044209">
    <property type="term" value="P:AMP salvage"/>
    <property type="evidence" value="ECO:0007669"/>
    <property type="project" value="UniProtKB-UniRule"/>
</dbReference>
<dbReference type="GO" id="GO:0006166">
    <property type="term" value="P:purine ribonucleoside salvage"/>
    <property type="evidence" value="ECO:0007669"/>
    <property type="project" value="UniProtKB-KW"/>
</dbReference>
<dbReference type="CDD" id="cd06223">
    <property type="entry name" value="PRTases_typeI"/>
    <property type="match status" value="1"/>
</dbReference>
<dbReference type="FunFam" id="3.40.50.2020:FF:000004">
    <property type="entry name" value="Adenine phosphoribosyltransferase"/>
    <property type="match status" value="1"/>
</dbReference>
<dbReference type="Gene3D" id="3.40.50.2020">
    <property type="match status" value="1"/>
</dbReference>
<dbReference type="HAMAP" id="MF_00004">
    <property type="entry name" value="Aden_phosphoribosyltr"/>
    <property type="match status" value="1"/>
</dbReference>
<dbReference type="InterPro" id="IPR005764">
    <property type="entry name" value="Ade_phspho_trans"/>
</dbReference>
<dbReference type="InterPro" id="IPR050120">
    <property type="entry name" value="Adenine_PRTase"/>
</dbReference>
<dbReference type="InterPro" id="IPR000836">
    <property type="entry name" value="PRibTrfase_dom"/>
</dbReference>
<dbReference type="InterPro" id="IPR029057">
    <property type="entry name" value="PRTase-like"/>
</dbReference>
<dbReference type="NCBIfam" id="TIGR01090">
    <property type="entry name" value="apt"/>
    <property type="match status" value="1"/>
</dbReference>
<dbReference type="NCBIfam" id="NF002632">
    <property type="entry name" value="PRK02304.1-1"/>
    <property type="match status" value="1"/>
</dbReference>
<dbReference type="NCBIfam" id="NF002634">
    <property type="entry name" value="PRK02304.1-3"/>
    <property type="match status" value="1"/>
</dbReference>
<dbReference type="NCBIfam" id="NF002636">
    <property type="entry name" value="PRK02304.1-5"/>
    <property type="match status" value="1"/>
</dbReference>
<dbReference type="PANTHER" id="PTHR11776">
    <property type="entry name" value="ADENINE PHOSPHORIBOSYLTRANSFERASE"/>
    <property type="match status" value="1"/>
</dbReference>
<dbReference type="PANTHER" id="PTHR11776:SF7">
    <property type="entry name" value="PHOSPHORIBOSYLTRANSFERASE DOMAIN-CONTAINING PROTEIN"/>
    <property type="match status" value="1"/>
</dbReference>
<dbReference type="Pfam" id="PF00156">
    <property type="entry name" value="Pribosyltran"/>
    <property type="match status" value="1"/>
</dbReference>
<dbReference type="SUPFAM" id="SSF53271">
    <property type="entry name" value="PRTase-like"/>
    <property type="match status" value="1"/>
</dbReference>
<dbReference type="PROSITE" id="PS00103">
    <property type="entry name" value="PUR_PYR_PR_TRANSFER"/>
    <property type="match status" value="1"/>
</dbReference>
<organism>
    <name type="scientific">Haemophilus influenzae (strain 86-028NP)</name>
    <dbReference type="NCBI Taxonomy" id="281310"/>
    <lineage>
        <taxon>Bacteria</taxon>
        <taxon>Pseudomonadati</taxon>
        <taxon>Pseudomonadota</taxon>
        <taxon>Gammaproteobacteria</taxon>
        <taxon>Pasteurellales</taxon>
        <taxon>Pasteurellaceae</taxon>
        <taxon>Haemophilus</taxon>
    </lineage>
</organism>
<sequence length="180" mass="19710">MTTQLDLIKSSIKSIPNYPKEGIIFRDITTLLEVPAAFKATIDLIVEQYRDKGITKVLGTESRGFIFGAPVALALGLPFELVRKPKKLPRETISQSYQLEYGQDTLEMHVDAISEGDNVLIIDDLLATGGTVEATVKLVQRLGGAVKHAAFVINLPELGGEKRLNNLGVDCYTLVNFEGH</sequence>
<comment type="function">
    <text evidence="1">Catalyzes a salvage reaction resulting in the formation of AMP, that is energically less costly than de novo synthesis.</text>
</comment>
<comment type="catalytic activity">
    <reaction evidence="1">
        <text>AMP + diphosphate = 5-phospho-alpha-D-ribose 1-diphosphate + adenine</text>
        <dbReference type="Rhea" id="RHEA:16609"/>
        <dbReference type="ChEBI" id="CHEBI:16708"/>
        <dbReference type="ChEBI" id="CHEBI:33019"/>
        <dbReference type="ChEBI" id="CHEBI:58017"/>
        <dbReference type="ChEBI" id="CHEBI:456215"/>
        <dbReference type="EC" id="2.4.2.7"/>
    </reaction>
</comment>
<comment type="pathway">
    <text evidence="1">Purine metabolism; AMP biosynthesis via salvage pathway; AMP from adenine: step 1/1.</text>
</comment>
<comment type="subunit">
    <text evidence="1">Homodimer.</text>
</comment>
<comment type="subcellular location">
    <subcellularLocation>
        <location evidence="1">Cytoplasm</location>
    </subcellularLocation>
</comment>
<comment type="similarity">
    <text evidence="1">Belongs to the purine/pyrimidine phosphoribosyltransferase family.</text>
</comment>
<feature type="chain" id="PRO_0000149392" description="Adenine phosphoribosyltransferase">
    <location>
        <begin position="1"/>
        <end position="180"/>
    </location>
</feature>
<name>APT_HAEI8</name>
<proteinExistence type="inferred from homology"/>
<evidence type="ECO:0000255" key="1">
    <source>
        <dbReference type="HAMAP-Rule" id="MF_00004"/>
    </source>
</evidence>
<accession>Q4QJV7</accession>